<gene>
    <name evidence="1" type="primary">ruvB</name>
    <name type="ordered locus">MT2669</name>
</gene>
<dbReference type="EC" id="3.6.4.-" evidence="1"/>
<dbReference type="EMBL" id="AE000516">
    <property type="protein sequence ID" value="AAK46983.1"/>
    <property type="molecule type" value="Genomic_DNA"/>
</dbReference>
<dbReference type="PIR" id="G70726">
    <property type="entry name" value="G70726"/>
</dbReference>
<dbReference type="RefSeq" id="WP_003413416.1">
    <property type="nucleotide sequence ID" value="NZ_KK341227.1"/>
</dbReference>
<dbReference type="SMR" id="P9WGW0"/>
<dbReference type="GeneID" id="45426594"/>
<dbReference type="KEGG" id="mtc:MT2669"/>
<dbReference type="PATRIC" id="fig|83331.31.peg.2876"/>
<dbReference type="HOGENOM" id="CLU_055599_1_0_11"/>
<dbReference type="Proteomes" id="UP000001020">
    <property type="component" value="Chromosome"/>
</dbReference>
<dbReference type="GO" id="GO:0005737">
    <property type="term" value="C:cytoplasm"/>
    <property type="evidence" value="ECO:0007669"/>
    <property type="project" value="UniProtKB-SubCell"/>
</dbReference>
<dbReference type="GO" id="GO:0048476">
    <property type="term" value="C:Holliday junction resolvase complex"/>
    <property type="evidence" value="ECO:0007669"/>
    <property type="project" value="UniProtKB-UniRule"/>
</dbReference>
<dbReference type="GO" id="GO:0005524">
    <property type="term" value="F:ATP binding"/>
    <property type="evidence" value="ECO:0007669"/>
    <property type="project" value="UniProtKB-UniRule"/>
</dbReference>
<dbReference type="GO" id="GO:0016887">
    <property type="term" value="F:ATP hydrolysis activity"/>
    <property type="evidence" value="ECO:0007669"/>
    <property type="project" value="InterPro"/>
</dbReference>
<dbReference type="GO" id="GO:0000400">
    <property type="term" value="F:four-way junction DNA binding"/>
    <property type="evidence" value="ECO:0007669"/>
    <property type="project" value="UniProtKB-UniRule"/>
</dbReference>
<dbReference type="GO" id="GO:0009378">
    <property type="term" value="F:four-way junction helicase activity"/>
    <property type="evidence" value="ECO:0007669"/>
    <property type="project" value="InterPro"/>
</dbReference>
<dbReference type="GO" id="GO:0006310">
    <property type="term" value="P:DNA recombination"/>
    <property type="evidence" value="ECO:0007669"/>
    <property type="project" value="UniProtKB-UniRule"/>
</dbReference>
<dbReference type="GO" id="GO:0006281">
    <property type="term" value="P:DNA repair"/>
    <property type="evidence" value="ECO:0007669"/>
    <property type="project" value="UniProtKB-UniRule"/>
</dbReference>
<dbReference type="CDD" id="cd00009">
    <property type="entry name" value="AAA"/>
    <property type="match status" value="1"/>
</dbReference>
<dbReference type="Gene3D" id="1.10.8.60">
    <property type="match status" value="1"/>
</dbReference>
<dbReference type="Gene3D" id="3.40.50.300">
    <property type="entry name" value="P-loop containing nucleotide triphosphate hydrolases"/>
    <property type="match status" value="1"/>
</dbReference>
<dbReference type="Gene3D" id="1.10.10.10">
    <property type="entry name" value="Winged helix-like DNA-binding domain superfamily/Winged helix DNA-binding domain"/>
    <property type="match status" value="1"/>
</dbReference>
<dbReference type="HAMAP" id="MF_00016">
    <property type="entry name" value="DNA_HJ_migration_RuvB"/>
    <property type="match status" value="1"/>
</dbReference>
<dbReference type="InterPro" id="IPR003593">
    <property type="entry name" value="AAA+_ATPase"/>
</dbReference>
<dbReference type="InterPro" id="IPR041445">
    <property type="entry name" value="AAA_lid_4"/>
</dbReference>
<dbReference type="InterPro" id="IPR004605">
    <property type="entry name" value="DNA_helicase_Holl-junc_RuvB"/>
</dbReference>
<dbReference type="InterPro" id="IPR027417">
    <property type="entry name" value="P-loop_NTPase"/>
</dbReference>
<dbReference type="InterPro" id="IPR008824">
    <property type="entry name" value="RuvB-like_N"/>
</dbReference>
<dbReference type="InterPro" id="IPR008823">
    <property type="entry name" value="RuvB_C"/>
</dbReference>
<dbReference type="InterPro" id="IPR036388">
    <property type="entry name" value="WH-like_DNA-bd_sf"/>
</dbReference>
<dbReference type="InterPro" id="IPR036390">
    <property type="entry name" value="WH_DNA-bd_sf"/>
</dbReference>
<dbReference type="NCBIfam" id="NF000868">
    <property type="entry name" value="PRK00080.1"/>
    <property type="match status" value="1"/>
</dbReference>
<dbReference type="NCBIfam" id="TIGR00635">
    <property type="entry name" value="ruvB"/>
    <property type="match status" value="1"/>
</dbReference>
<dbReference type="PANTHER" id="PTHR42848">
    <property type="match status" value="1"/>
</dbReference>
<dbReference type="PANTHER" id="PTHR42848:SF1">
    <property type="entry name" value="HOLLIDAY JUNCTION BRANCH MIGRATION COMPLEX SUBUNIT RUVB"/>
    <property type="match status" value="1"/>
</dbReference>
<dbReference type="Pfam" id="PF17864">
    <property type="entry name" value="AAA_lid_4"/>
    <property type="match status" value="1"/>
</dbReference>
<dbReference type="Pfam" id="PF05491">
    <property type="entry name" value="RuvB_C"/>
    <property type="match status" value="1"/>
</dbReference>
<dbReference type="Pfam" id="PF05496">
    <property type="entry name" value="RuvB_N"/>
    <property type="match status" value="1"/>
</dbReference>
<dbReference type="PRINTS" id="PR00830">
    <property type="entry name" value="ENDOLAPTASE"/>
</dbReference>
<dbReference type="SMART" id="SM00382">
    <property type="entry name" value="AAA"/>
    <property type="match status" value="1"/>
</dbReference>
<dbReference type="SUPFAM" id="SSF52540">
    <property type="entry name" value="P-loop containing nucleoside triphosphate hydrolases"/>
    <property type="match status" value="1"/>
</dbReference>
<dbReference type="SUPFAM" id="SSF46785">
    <property type="entry name" value="Winged helix' DNA-binding domain"/>
    <property type="match status" value="1"/>
</dbReference>
<reference key="1">
    <citation type="journal article" date="2002" name="J. Bacteriol.">
        <title>Whole-genome comparison of Mycobacterium tuberculosis clinical and laboratory strains.</title>
        <authorList>
            <person name="Fleischmann R.D."/>
            <person name="Alland D."/>
            <person name="Eisen J.A."/>
            <person name="Carpenter L."/>
            <person name="White O."/>
            <person name="Peterson J.D."/>
            <person name="DeBoy R.T."/>
            <person name="Dodson R.J."/>
            <person name="Gwinn M.L."/>
            <person name="Haft D.H."/>
            <person name="Hickey E.K."/>
            <person name="Kolonay J.F."/>
            <person name="Nelson W.C."/>
            <person name="Umayam L.A."/>
            <person name="Ermolaeva M.D."/>
            <person name="Salzberg S.L."/>
            <person name="Delcher A."/>
            <person name="Utterback T.R."/>
            <person name="Weidman J.F."/>
            <person name="Khouri H.M."/>
            <person name="Gill J."/>
            <person name="Mikula A."/>
            <person name="Bishai W."/>
            <person name="Jacobs W.R. Jr."/>
            <person name="Venter J.C."/>
            <person name="Fraser C.M."/>
        </authorList>
    </citation>
    <scope>NUCLEOTIDE SEQUENCE [LARGE SCALE GENOMIC DNA]</scope>
    <source>
        <strain>CDC 1551 / Oshkosh</strain>
    </source>
</reference>
<proteinExistence type="inferred from homology"/>
<name>RUVB_MYCTO</name>
<comment type="function">
    <text evidence="1">The RuvA-RuvB-RuvC complex processes Holliday junction (HJ) DNA during genetic recombination and DNA repair, while the RuvA-RuvB complex plays an important role in the rescue of blocked DNA replication forks via replication fork reversal (RFR). RuvA specifically binds to HJ cruciform DNA, conferring on it an open structure. The RuvB hexamer acts as an ATP-dependent pump, pulling dsDNA into and through the RuvAB complex. RuvB forms 2 homohexamers on either side of HJ DNA bound by 1 or 2 RuvA tetramers; 4 subunits per hexamer contact DNA at a time. Coordinated motions by a converter formed by DNA-disengaged RuvB subunits stimulates ATP hydrolysis and nucleotide exchange. Immobilization of the converter enables RuvB to convert the ATP-contained energy into a lever motion, pulling 2 nucleotides of DNA out of the RuvA tetramer per ATP hydrolyzed, thus driving DNA branch migration. The RuvB motors rotate together with the DNA substrate, which together with the progressing nucleotide cycle form the mechanistic basis for DNA recombination by continuous HJ branch migration. Branch migration allows RuvC to scan DNA until it finds its consensus sequence, where it cleaves and resolves cruciform DNA.</text>
</comment>
<comment type="catalytic activity">
    <reaction evidence="1">
        <text>ATP + H2O = ADP + phosphate + H(+)</text>
        <dbReference type="Rhea" id="RHEA:13065"/>
        <dbReference type="ChEBI" id="CHEBI:15377"/>
        <dbReference type="ChEBI" id="CHEBI:15378"/>
        <dbReference type="ChEBI" id="CHEBI:30616"/>
        <dbReference type="ChEBI" id="CHEBI:43474"/>
        <dbReference type="ChEBI" id="CHEBI:456216"/>
    </reaction>
</comment>
<comment type="subunit">
    <text evidence="1">Homohexamer. Forms an RuvA(8)-RuvB(12)-Holliday junction (HJ) complex. HJ DNA is sandwiched between 2 RuvA tetramers; dsDNA enters through RuvA and exits via RuvB. An RuvB hexamer assembles on each DNA strand where it exits the tetramer. Each RuvB hexamer is contacted by two RuvA subunits (via domain III) on 2 adjacent RuvB subunits; this complex drives branch migration. In the full resolvosome a probable DNA-RuvA(4)-RuvB(12)-RuvC(2) complex forms which resolves the HJ.</text>
</comment>
<comment type="subcellular location">
    <subcellularLocation>
        <location evidence="1">Cytoplasm</location>
    </subcellularLocation>
</comment>
<comment type="domain">
    <text evidence="1">Has 3 domains, the large (RuvB-L) and small ATPase (RuvB-S) domains and the C-terminal head (RuvB-H) domain. The head domain binds DNA, while the ATPase domains jointly bind ATP, ADP or are empty depending on the state of the subunit in the translocation cycle. During a single DNA translocation step the structure of each domain remains the same, but their relative positions change.</text>
</comment>
<comment type="similarity">
    <text evidence="1">Belongs to the RuvB family.</text>
</comment>
<keyword id="KW-0067">ATP-binding</keyword>
<keyword id="KW-0963">Cytoplasm</keyword>
<keyword id="KW-0227">DNA damage</keyword>
<keyword id="KW-0233">DNA recombination</keyword>
<keyword id="KW-0234">DNA repair</keyword>
<keyword id="KW-0238">DNA-binding</keyword>
<keyword id="KW-0378">Hydrolase</keyword>
<keyword id="KW-0547">Nucleotide-binding</keyword>
<keyword id="KW-1185">Reference proteome</keyword>
<organism>
    <name type="scientific">Mycobacterium tuberculosis (strain CDC 1551 / Oshkosh)</name>
    <dbReference type="NCBI Taxonomy" id="83331"/>
    <lineage>
        <taxon>Bacteria</taxon>
        <taxon>Bacillati</taxon>
        <taxon>Actinomycetota</taxon>
        <taxon>Actinomycetes</taxon>
        <taxon>Mycobacteriales</taxon>
        <taxon>Mycobacteriaceae</taxon>
        <taxon>Mycobacterium</taxon>
        <taxon>Mycobacterium tuberculosis complex</taxon>
    </lineage>
</organism>
<sequence>MTERSDRDVSPALTVGEGDIDVSLRPRSLREFIGQPRVREQLQLVIEGAKNRGGTPDHILLSGPPGLGKTSLAMIIAAELGSSLRVTSGPALERAGDLAAMLSNLVEHDVLFIDEIHRIARPAEEMLYLAMEDFRVDVVVGKGPGATSIPLEVAPFTLVGATTRSGALTGPLRDRFGFTAHMDFYEPAELERVLARSAGILGIELGADAGAEIARRSRGTPRIANRLLRRVRDFAEVRADGVITRDVAKAALEVYDVDELGLDRLDRAVLSALTRSFGGGPVGVSTLAVAVGEEAATVEEVCEPFLVRAGMVARTPRGRVATALAWTHLGMTPPVGASQPGLFE</sequence>
<evidence type="ECO:0000255" key="1">
    <source>
        <dbReference type="HAMAP-Rule" id="MF_00016"/>
    </source>
</evidence>
<accession>P9WGW0</accession>
<accession>L0TCV1</accession>
<accession>P66753</accession>
<accession>Q50629</accession>
<protein>
    <recommendedName>
        <fullName evidence="1">Holliday junction branch migration complex subunit RuvB</fullName>
        <ecNumber evidence="1">3.6.4.-</ecNumber>
    </recommendedName>
</protein>
<feature type="chain" id="PRO_0000428293" description="Holliday junction branch migration complex subunit RuvB">
    <location>
        <begin position="1"/>
        <end position="344"/>
    </location>
</feature>
<feature type="region of interest" description="Large ATPase domain (RuvB-L)" evidence="1">
    <location>
        <begin position="1"/>
        <end position="185"/>
    </location>
</feature>
<feature type="region of interest" description="Small ATPAse domain (RuvB-S)" evidence="1">
    <location>
        <begin position="186"/>
        <end position="256"/>
    </location>
</feature>
<feature type="region of interest" description="Head domain (RuvB-H)" evidence="1">
    <location>
        <begin position="259"/>
        <end position="344"/>
    </location>
</feature>
<feature type="binding site" evidence="1">
    <location>
        <position position="24"/>
    </location>
    <ligand>
        <name>ATP</name>
        <dbReference type="ChEBI" id="CHEBI:30616"/>
    </ligand>
</feature>
<feature type="binding site" evidence="1">
    <location>
        <position position="25"/>
    </location>
    <ligand>
        <name>ATP</name>
        <dbReference type="ChEBI" id="CHEBI:30616"/>
    </ligand>
</feature>
<feature type="binding site" evidence="1">
    <location>
        <position position="66"/>
    </location>
    <ligand>
        <name>ATP</name>
        <dbReference type="ChEBI" id="CHEBI:30616"/>
    </ligand>
</feature>
<feature type="binding site" evidence="1">
    <location>
        <position position="69"/>
    </location>
    <ligand>
        <name>ATP</name>
        <dbReference type="ChEBI" id="CHEBI:30616"/>
    </ligand>
</feature>
<feature type="binding site" evidence="1">
    <location>
        <position position="70"/>
    </location>
    <ligand>
        <name>ATP</name>
        <dbReference type="ChEBI" id="CHEBI:30616"/>
    </ligand>
</feature>
<feature type="binding site" evidence="1">
    <location>
        <position position="70"/>
    </location>
    <ligand>
        <name>Mg(2+)</name>
        <dbReference type="ChEBI" id="CHEBI:18420"/>
    </ligand>
</feature>
<feature type="binding site" evidence="1">
    <location>
        <position position="71"/>
    </location>
    <ligand>
        <name>ATP</name>
        <dbReference type="ChEBI" id="CHEBI:30616"/>
    </ligand>
</feature>
<feature type="binding site" evidence="1">
    <location>
        <begin position="132"/>
        <end position="134"/>
    </location>
    <ligand>
        <name>ATP</name>
        <dbReference type="ChEBI" id="CHEBI:30616"/>
    </ligand>
</feature>
<feature type="binding site" evidence="1">
    <location>
        <position position="175"/>
    </location>
    <ligand>
        <name>ATP</name>
        <dbReference type="ChEBI" id="CHEBI:30616"/>
    </ligand>
</feature>
<feature type="binding site" evidence="1">
    <location>
        <position position="185"/>
    </location>
    <ligand>
        <name>ATP</name>
        <dbReference type="ChEBI" id="CHEBI:30616"/>
    </ligand>
</feature>
<feature type="binding site" evidence="1">
    <location>
        <position position="222"/>
    </location>
    <ligand>
        <name>ATP</name>
        <dbReference type="ChEBI" id="CHEBI:30616"/>
    </ligand>
</feature>
<feature type="binding site" evidence="1">
    <location>
        <position position="314"/>
    </location>
    <ligand>
        <name>DNA</name>
        <dbReference type="ChEBI" id="CHEBI:16991"/>
    </ligand>
</feature>
<feature type="binding site" evidence="1">
    <location>
        <position position="319"/>
    </location>
    <ligand>
        <name>DNA</name>
        <dbReference type="ChEBI" id="CHEBI:16991"/>
    </ligand>
</feature>